<sequence>MPKSVIIPAGSSAPLAPFVPGTLADGVVYVSGTLAFDQHNNVLFADDPKAQTRHVLETIRKVIETAGGTMADVTFNSIFITDWKNYAAINEIYAEFFPGDKPARFCIQCGLVKPDALVEIATIAHIAK</sequence>
<reference key="1">
    <citation type="journal article" date="2009" name="Proc. Natl. Acad. Sci. U.S.A.">
        <title>Comparative genomics reveal the mechanism of the parallel evolution of O157 and non-O157 enterohemorrhagic Escherichia coli.</title>
        <authorList>
            <person name="Ogura Y."/>
            <person name="Ooka T."/>
            <person name="Iguchi A."/>
            <person name="Toh H."/>
            <person name="Asadulghani M."/>
            <person name="Oshima K."/>
            <person name="Kodama T."/>
            <person name="Abe H."/>
            <person name="Nakayama K."/>
            <person name="Kurokawa K."/>
            <person name="Tobe T."/>
            <person name="Hattori M."/>
            <person name="Hayashi T."/>
        </authorList>
    </citation>
    <scope>NUCLEOTIDE SEQUENCE [LARGE SCALE GENOMIC DNA]</scope>
    <source>
        <strain>12009 / EHEC</strain>
    </source>
</reference>
<dbReference type="EC" id="3.5.-.-" evidence="1"/>
<dbReference type="EMBL" id="AP010958">
    <property type="protein sequence ID" value="BAI29901.1"/>
    <property type="molecule type" value="Genomic_DNA"/>
</dbReference>
<dbReference type="RefSeq" id="WP_001126780.1">
    <property type="nucleotide sequence ID" value="NC_013353.1"/>
</dbReference>
<dbReference type="SMR" id="C8U5H2"/>
<dbReference type="GeneID" id="75171086"/>
<dbReference type="KEGG" id="eoh:ECO103_1056"/>
<dbReference type="HOGENOM" id="CLU_100715_7_3_6"/>
<dbReference type="GO" id="GO:0005829">
    <property type="term" value="C:cytosol"/>
    <property type="evidence" value="ECO:0007669"/>
    <property type="project" value="TreeGrafter"/>
</dbReference>
<dbReference type="GO" id="GO:0019239">
    <property type="term" value="F:deaminase activity"/>
    <property type="evidence" value="ECO:0007669"/>
    <property type="project" value="TreeGrafter"/>
</dbReference>
<dbReference type="GO" id="GO:0019740">
    <property type="term" value="P:nitrogen utilization"/>
    <property type="evidence" value="ECO:0007669"/>
    <property type="project" value="UniProtKB-UniRule"/>
</dbReference>
<dbReference type="GO" id="GO:0006212">
    <property type="term" value="P:uracil catabolic process"/>
    <property type="evidence" value="ECO:0007669"/>
    <property type="project" value="UniProtKB-UniRule"/>
</dbReference>
<dbReference type="CDD" id="cd00448">
    <property type="entry name" value="YjgF_YER057c_UK114_family"/>
    <property type="match status" value="1"/>
</dbReference>
<dbReference type="FunFam" id="3.30.1330.40:FF:000003">
    <property type="entry name" value="Putative aminoacrylate peracid reductase RutC"/>
    <property type="match status" value="1"/>
</dbReference>
<dbReference type="Gene3D" id="3.30.1330.40">
    <property type="entry name" value="RutC-like"/>
    <property type="match status" value="1"/>
</dbReference>
<dbReference type="HAMAP" id="MF_00831">
    <property type="entry name" value="RutC"/>
    <property type="match status" value="1"/>
</dbReference>
<dbReference type="InterPro" id="IPR019897">
    <property type="entry name" value="RidA_CS"/>
</dbReference>
<dbReference type="InterPro" id="IPR019898">
    <property type="entry name" value="RutC"/>
</dbReference>
<dbReference type="InterPro" id="IPR035959">
    <property type="entry name" value="RutC-like_sf"/>
</dbReference>
<dbReference type="InterPro" id="IPR006175">
    <property type="entry name" value="YjgF/YER057c/UK114"/>
</dbReference>
<dbReference type="NCBIfam" id="TIGR03610">
    <property type="entry name" value="RutC"/>
    <property type="match status" value="1"/>
</dbReference>
<dbReference type="PANTHER" id="PTHR11803">
    <property type="entry name" value="2-IMINOBUTANOATE/2-IMINOPROPANOATE DEAMINASE RIDA"/>
    <property type="match status" value="1"/>
</dbReference>
<dbReference type="PANTHER" id="PTHR11803:SF58">
    <property type="entry name" value="PROTEIN HMF1-RELATED"/>
    <property type="match status" value="1"/>
</dbReference>
<dbReference type="Pfam" id="PF01042">
    <property type="entry name" value="Ribonuc_L-PSP"/>
    <property type="match status" value="1"/>
</dbReference>
<dbReference type="SUPFAM" id="SSF55298">
    <property type="entry name" value="YjgF-like"/>
    <property type="match status" value="1"/>
</dbReference>
<dbReference type="PROSITE" id="PS01094">
    <property type="entry name" value="UPF0076"/>
    <property type="match status" value="1"/>
</dbReference>
<comment type="function">
    <text evidence="1">Involved in pyrimidine catabolism. Catalyzes the deamination of 3-aminoacrylate to malonic semialdehyde, a reaction that can also occur spontaneously. RutC may facilitate the reaction and modulate the metabolic fitness, rather than catalyzing essential functions.</text>
</comment>
<comment type="catalytic activity">
    <reaction evidence="1">
        <text>(Z)-3-aminoacrylate + H2O + H(+) = 3-oxopropanoate + NH4(+)</text>
        <dbReference type="Rhea" id="RHEA:34947"/>
        <dbReference type="ChEBI" id="CHEBI:15377"/>
        <dbReference type="ChEBI" id="CHEBI:15378"/>
        <dbReference type="ChEBI" id="CHEBI:28938"/>
        <dbReference type="ChEBI" id="CHEBI:33190"/>
        <dbReference type="ChEBI" id="CHEBI:59894"/>
    </reaction>
</comment>
<comment type="subunit">
    <text evidence="1">Homotrimer.</text>
</comment>
<comment type="similarity">
    <text evidence="1">Belongs to the RutC family.</text>
</comment>
<protein>
    <recommendedName>
        <fullName evidence="1">3-aminoacrylate deaminase RutC</fullName>
        <shortName evidence="1">3-AA deaminase</shortName>
        <ecNumber evidence="1">3.5.-.-</ecNumber>
    </recommendedName>
</protein>
<proteinExistence type="inferred from homology"/>
<name>RUTC_ECO10</name>
<keyword id="KW-0378">Hydrolase</keyword>
<evidence type="ECO:0000255" key="1">
    <source>
        <dbReference type="HAMAP-Rule" id="MF_00831"/>
    </source>
</evidence>
<feature type="chain" id="PRO_0000402732" description="3-aminoacrylate deaminase RutC">
    <location>
        <begin position="1"/>
        <end position="128"/>
    </location>
</feature>
<organism>
    <name type="scientific">Escherichia coli O103:H2 (strain 12009 / EHEC)</name>
    <dbReference type="NCBI Taxonomy" id="585395"/>
    <lineage>
        <taxon>Bacteria</taxon>
        <taxon>Pseudomonadati</taxon>
        <taxon>Pseudomonadota</taxon>
        <taxon>Gammaproteobacteria</taxon>
        <taxon>Enterobacterales</taxon>
        <taxon>Enterobacteriaceae</taxon>
        <taxon>Escherichia</taxon>
    </lineage>
</organism>
<accession>C8U5H2</accession>
<gene>
    <name evidence="1" type="primary">rutC</name>
    <name type="ordered locus">ECO103_1056</name>
</gene>